<accession>B3F0J0</accession>
<organism>
    <name type="scientific">Marmota himalayana</name>
    <name type="common">Himalayan marmot</name>
    <dbReference type="NCBI Taxonomy" id="93163"/>
    <lineage>
        <taxon>Eukaryota</taxon>
        <taxon>Metazoa</taxon>
        <taxon>Chordata</taxon>
        <taxon>Craniata</taxon>
        <taxon>Vertebrata</taxon>
        <taxon>Euteleostomi</taxon>
        <taxon>Mammalia</taxon>
        <taxon>Eutheria</taxon>
        <taxon>Euarchontoglires</taxon>
        <taxon>Glires</taxon>
        <taxon>Rodentia</taxon>
        <taxon>Sciuromorpha</taxon>
        <taxon>Sciuridae</taxon>
        <taxon>Xerinae</taxon>
        <taxon>Marmotini</taxon>
        <taxon>Marmota</taxon>
    </lineage>
</organism>
<sequence>MRISKPHLRITSIQCYVCLLLNTHFLTEAGIRVFILGCISAGIPKTEANWEDVRKDLQKIENLIQSLHMDATLYTESDVHPRCKVTTMNCFLLELEVISHESRDGDIEETVKNLILLANSSLSSNGNITESGCKVCEELEEKNITEFLESFKHIVQMFINPP</sequence>
<feature type="signal peptide" evidence="4">
    <location>
        <begin position="1"/>
        <end position="29"/>
    </location>
</feature>
<feature type="propeptide" id="PRO_0000358328" evidence="4">
    <location>
        <begin position="30"/>
        <end position="48"/>
    </location>
</feature>
<feature type="chain" id="PRO_0000358329" description="Interleukin-15">
    <location>
        <begin position="49"/>
        <end position="162"/>
    </location>
</feature>
<feature type="glycosylation site" description="N-linked (GlcNAc...) asparagine" evidence="4">
    <location>
        <position position="119"/>
    </location>
</feature>
<feature type="glycosylation site" description="N-linked (GlcNAc...) asparagine" evidence="4">
    <location>
        <position position="127"/>
    </location>
</feature>
<feature type="glycosylation site" description="N-linked (GlcNAc...) asparagine" evidence="4">
    <location>
        <position position="143"/>
    </location>
</feature>
<feature type="disulfide bond" evidence="1">
    <location>
        <begin position="83"/>
        <end position="133"/>
    </location>
</feature>
<feature type="disulfide bond" evidence="1">
    <location>
        <begin position="90"/>
        <end position="136"/>
    </location>
</feature>
<evidence type="ECO:0000250" key="1"/>
<evidence type="ECO:0000250" key="2">
    <source>
        <dbReference type="UniProtKB" id="P40933"/>
    </source>
</evidence>
<evidence type="ECO:0000250" key="3">
    <source>
        <dbReference type="UniProtKB" id="P48346"/>
    </source>
</evidence>
<evidence type="ECO:0000255" key="4"/>
<evidence type="ECO:0000305" key="5"/>
<dbReference type="EMBL" id="EF414446">
    <property type="protein sequence ID" value="ABQ82251.1"/>
    <property type="molecule type" value="mRNA"/>
</dbReference>
<dbReference type="SMR" id="B3F0J0"/>
<dbReference type="GlyCosmos" id="B3F0J0">
    <property type="glycosylation" value="3 sites, No reported glycans"/>
</dbReference>
<dbReference type="GO" id="GO:0005615">
    <property type="term" value="C:extracellular space"/>
    <property type="evidence" value="ECO:0007669"/>
    <property type="project" value="UniProtKB-KW"/>
</dbReference>
<dbReference type="GO" id="GO:0005125">
    <property type="term" value="F:cytokine activity"/>
    <property type="evidence" value="ECO:0007669"/>
    <property type="project" value="UniProtKB-KW"/>
</dbReference>
<dbReference type="GO" id="GO:0005126">
    <property type="term" value="F:cytokine receptor binding"/>
    <property type="evidence" value="ECO:0007669"/>
    <property type="project" value="InterPro"/>
</dbReference>
<dbReference type="GO" id="GO:0006955">
    <property type="term" value="P:immune response"/>
    <property type="evidence" value="ECO:0007669"/>
    <property type="project" value="InterPro"/>
</dbReference>
<dbReference type="GO" id="GO:0035723">
    <property type="term" value="P:interleukin-15-mediated signaling pathway"/>
    <property type="evidence" value="ECO:0000250"/>
    <property type="project" value="UniProtKB"/>
</dbReference>
<dbReference type="GO" id="GO:0042119">
    <property type="term" value="P:neutrophil activation"/>
    <property type="evidence" value="ECO:0000250"/>
    <property type="project" value="UniProtKB"/>
</dbReference>
<dbReference type="GO" id="GO:0001819">
    <property type="term" value="P:positive regulation of cytokine production"/>
    <property type="evidence" value="ECO:0007669"/>
    <property type="project" value="TreeGrafter"/>
</dbReference>
<dbReference type="GO" id="GO:0050778">
    <property type="term" value="P:positive regulation of immune response"/>
    <property type="evidence" value="ECO:0007669"/>
    <property type="project" value="TreeGrafter"/>
</dbReference>
<dbReference type="GO" id="GO:0050731">
    <property type="term" value="P:positive regulation of peptidyl-tyrosine phosphorylation"/>
    <property type="evidence" value="ECO:0000250"/>
    <property type="project" value="UniProtKB"/>
</dbReference>
<dbReference type="GO" id="GO:0050766">
    <property type="term" value="P:positive regulation of phagocytosis"/>
    <property type="evidence" value="ECO:0000250"/>
    <property type="project" value="UniProtKB"/>
</dbReference>
<dbReference type="GO" id="GO:0042102">
    <property type="term" value="P:positive regulation of T cell proliferation"/>
    <property type="evidence" value="ECO:0007669"/>
    <property type="project" value="TreeGrafter"/>
</dbReference>
<dbReference type="FunFam" id="1.20.1250.70:FF:000001">
    <property type="entry name" value="Interleukin"/>
    <property type="match status" value="1"/>
</dbReference>
<dbReference type="Gene3D" id="1.20.1250.70">
    <property type="entry name" value="Interleukin-15/Interleukin-21"/>
    <property type="match status" value="1"/>
</dbReference>
<dbReference type="InterPro" id="IPR009079">
    <property type="entry name" value="4_helix_cytokine-like_core"/>
</dbReference>
<dbReference type="InterPro" id="IPR020439">
    <property type="entry name" value="IL-15"/>
</dbReference>
<dbReference type="InterPro" id="IPR003443">
    <property type="entry name" value="IL-15/IL-21_fam"/>
</dbReference>
<dbReference type="InterPro" id="IPR020466">
    <property type="entry name" value="IL-15_mml"/>
</dbReference>
<dbReference type="PANTHER" id="PTHR14356:SF3">
    <property type="entry name" value="INTERLEUKIN-15"/>
    <property type="match status" value="1"/>
</dbReference>
<dbReference type="PANTHER" id="PTHR14356">
    <property type="entry name" value="INTERLEUKIN-15-RELATED"/>
    <property type="match status" value="1"/>
</dbReference>
<dbReference type="Pfam" id="PF02372">
    <property type="entry name" value="IL15"/>
    <property type="match status" value="1"/>
</dbReference>
<dbReference type="PRINTS" id="PR01947">
    <property type="entry name" value="INTLKN15MAML"/>
</dbReference>
<dbReference type="PRINTS" id="PR01930">
    <property type="entry name" value="INTRLEUKIN15"/>
</dbReference>
<dbReference type="SUPFAM" id="SSF47266">
    <property type="entry name" value="4-helical cytokines"/>
    <property type="match status" value="1"/>
</dbReference>
<keyword id="KW-0202">Cytokine</keyword>
<keyword id="KW-1015">Disulfide bond</keyword>
<keyword id="KW-0325">Glycoprotein</keyword>
<keyword id="KW-0964">Secreted</keyword>
<keyword id="KW-0732">Signal</keyword>
<proteinExistence type="evidence at transcript level"/>
<reference key="1">
    <citation type="submission" date="2007-01" db="EMBL/GenBank/DDBJ databases">
        <title>Susceptibility of adult Chinese marmots to woodchuck hepatitis virus infection.</title>
        <authorList>
            <person name="Wang B."/>
            <person name="Tian Y."/>
            <person name="Meng Z."/>
            <person name="Yin Y."/>
            <person name="Li X."/>
            <person name="Zhang Z."/>
            <person name="Roggendorf M."/>
            <person name="Lu M."/>
            <person name="Yang D."/>
        </authorList>
    </citation>
    <scope>NUCLEOTIDE SEQUENCE [MRNA]</scope>
    <source>
        <tissue>Spleen</tissue>
    </source>
</reference>
<name>IL15_MARHI</name>
<comment type="function">
    <text evidence="2 3">Cytokine that plays a major role in the development of inflammatory and protective immune responses to microbial invaders and parasites by modulating immune cells of both the innate and adaptive immune systems. Stimulates the proliferation of natural killer cells, T-cells and B-cells and promotes the secretion of several cytokines. In monocytes, induces the production of IL8 and monocyte chemotactic protein 1/CCL2, two chemokines that attract neutrophils and monocytes respectively to sites of infection. Unlike most cytokines, which are secreted in soluble form, IL15 is expressed in association with its high affinity IL15RA on the surface of IL15-producing cells and delivers signals to target cells that express IL2RB and IL2RG receptor subunits. Binding to its receptor triggers the phosphorylation of JAK1 and JAK3 and the recruitment and subsequent phosphorylation of signal transducer and activator of transcription-3/STAT3 and STAT5 (By similarity). In mast cells, induces the rapid tyrosine phosphorylation of STAT6 and thereby controls mast cell survival and release of cytokines such as IL4 (By similarity).</text>
</comment>
<comment type="subcellular location">
    <subcellularLocation>
        <location>Secreted</location>
    </subcellularLocation>
</comment>
<comment type="similarity">
    <text evidence="5">Belongs to the IL-15/IL-21 family.</text>
</comment>
<gene>
    <name type="primary">IL15</name>
</gene>
<protein>
    <recommendedName>
        <fullName>Interleukin-15</fullName>
        <shortName>IL-15</shortName>
    </recommendedName>
</protein>